<reference key="1">
    <citation type="journal article" date="2007" name="Genome Res.">
        <title>Genome sequence of a proteolytic (Group I) Clostridium botulinum strain Hall A and comparative analysis of the clostridial genomes.</title>
        <authorList>
            <person name="Sebaihia M."/>
            <person name="Peck M.W."/>
            <person name="Minton N.P."/>
            <person name="Thomson N.R."/>
            <person name="Holden M.T.G."/>
            <person name="Mitchell W.J."/>
            <person name="Carter A.T."/>
            <person name="Bentley S.D."/>
            <person name="Mason D.R."/>
            <person name="Crossman L."/>
            <person name="Paul C.J."/>
            <person name="Ivens A."/>
            <person name="Wells-Bennik M.H.J."/>
            <person name="Davis I.J."/>
            <person name="Cerdeno-Tarraga A.M."/>
            <person name="Churcher C."/>
            <person name="Quail M.A."/>
            <person name="Chillingworth T."/>
            <person name="Feltwell T."/>
            <person name="Fraser A."/>
            <person name="Goodhead I."/>
            <person name="Hance Z."/>
            <person name="Jagels K."/>
            <person name="Larke N."/>
            <person name="Maddison M."/>
            <person name="Moule S."/>
            <person name="Mungall K."/>
            <person name="Norbertczak H."/>
            <person name="Rabbinowitsch E."/>
            <person name="Sanders M."/>
            <person name="Simmonds M."/>
            <person name="White B."/>
            <person name="Whithead S."/>
            <person name="Parkhill J."/>
        </authorList>
    </citation>
    <scope>NUCLEOTIDE SEQUENCE [LARGE SCALE GENOMIC DNA]</scope>
    <source>
        <strain>Hall / ATCC 3502 / NCTC 13319 / Type A</strain>
    </source>
</reference>
<reference key="2">
    <citation type="journal article" date="2007" name="PLoS ONE">
        <title>Analysis of the neurotoxin complex genes in Clostridium botulinum A1-A4 and B1 strains: BoNT/A3, /Ba4 and /B1 clusters are located within plasmids.</title>
        <authorList>
            <person name="Smith T.J."/>
            <person name="Hill K.K."/>
            <person name="Foley B.T."/>
            <person name="Detter J.C."/>
            <person name="Munk A.C."/>
            <person name="Bruce D.C."/>
            <person name="Doggett N.A."/>
            <person name="Smith L.A."/>
            <person name="Marks J.D."/>
            <person name="Xie G."/>
            <person name="Brettin T.S."/>
        </authorList>
    </citation>
    <scope>NUCLEOTIDE SEQUENCE [LARGE SCALE GENOMIC DNA]</scope>
    <source>
        <strain>Hall / ATCC 3502 / NCTC 13319 / Type A</strain>
    </source>
</reference>
<protein>
    <recommendedName>
        <fullName evidence="1">UPF0122 protein CBO2450/CLC_2298</fullName>
    </recommendedName>
</protein>
<sequence>MEEIVEMSLLLDFYGSLLTEKQNKIMDLYYNNDYSLKEISELTNTSRQAVHDIVKRCHKALLQYEEKLHMMERFINLENSKEKLLNMLNKVTKENIKEIDHIKKYIIDNI</sequence>
<organism>
    <name type="scientific">Clostridium botulinum (strain Hall / ATCC 3502 / NCTC 13319 / Type A)</name>
    <dbReference type="NCBI Taxonomy" id="441771"/>
    <lineage>
        <taxon>Bacteria</taxon>
        <taxon>Bacillati</taxon>
        <taxon>Bacillota</taxon>
        <taxon>Clostridia</taxon>
        <taxon>Eubacteriales</taxon>
        <taxon>Clostridiaceae</taxon>
        <taxon>Clostridium</taxon>
    </lineage>
</organism>
<name>Y2450_CLOBH</name>
<feature type="chain" id="PRO_1000012522" description="UPF0122 protein CBO2450/CLC_2298">
    <location>
        <begin position="1"/>
        <end position="110"/>
    </location>
</feature>
<evidence type="ECO:0000255" key="1">
    <source>
        <dbReference type="HAMAP-Rule" id="MF_00245"/>
    </source>
</evidence>
<accession>A5I4M8</accession>
<accession>A7G5S7</accession>
<proteinExistence type="inferred from homology"/>
<dbReference type="EMBL" id="CP000727">
    <property type="protein sequence ID" value="ABS36676.1"/>
    <property type="molecule type" value="Genomic_DNA"/>
</dbReference>
<dbReference type="EMBL" id="AM412317">
    <property type="protein sequence ID" value="CAL84000.1"/>
    <property type="molecule type" value="Genomic_DNA"/>
</dbReference>
<dbReference type="RefSeq" id="WP_003393779.1">
    <property type="nucleotide sequence ID" value="NC_009698.1"/>
</dbReference>
<dbReference type="RefSeq" id="YP_001254949.1">
    <property type="nucleotide sequence ID" value="NC_009495.1"/>
</dbReference>
<dbReference type="RefSeq" id="YP_001388142.1">
    <property type="nucleotide sequence ID" value="NC_009698.1"/>
</dbReference>
<dbReference type="SMR" id="A5I4M8"/>
<dbReference type="GeneID" id="5186705"/>
<dbReference type="KEGG" id="cbh:CLC_2298"/>
<dbReference type="KEGG" id="cbo:CBO2450"/>
<dbReference type="PATRIC" id="fig|413999.7.peg.2427"/>
<dbReference type="HOGENOM" id="CLU_129218_0_1_9"/>
<dbReference type="PRO" id="PR:A5I4M8"/>
<dbReference type="Proteomes" id="UP000001986">
    <property type="component" value="Chromosome"/>
</dbReference>
<dbReference type="Gene3D" id="1.10.10.10">
    <property type="entry name" value="Winged helix-like DNA-binding domain superfamily/Winged helix DNA-binding domain"/>
    <property type="match status" value="1"/>
</dbReference>
<dbReference type="HAMAP" id="MF_00245">
    <property type="entry name" value="UPF0122"/>
    <property type="match status" value="1"/>
</dbReference>
<dbReference type="InterPro" id="IPR013324">
    <property type="entry name" value="RNA_pol_sigma_r3/r4-like"/>
</dbReference>
<dbReference type="InterPro" id="IPR007394">
    <property type="entry name" value="UPF0122"/>
</dbReference>
<dbReference type="InterPro" id="IPR054831">
    <property type="entry name" value="UPF0122_fam_protein"/>
</dbReference>
<dbReference type="InterPro" id="IPR036388">
    <property type="entry name" value="WH-like_DNA-bd_sf"/>
</dbReference>
<dbReference type="NCBIfam" id="NF001072">
    <property type="entry name" value="PRK00118.2-2"/>
    <property type="match status" value="1"/>
</dbReference>
<dbReference type="NCBIfam" id="NF001074">
    <property type="entry name" value="PRK00118.2-4"/>
    <property type="match status" value="1"/>
</dbReference>
<dbReference type="NCBIfam" id="NF045758">
    <property type="entry name" value="YlxM"/>
    <property type="match status" value="1"/>
</dbReference>
<dbReference type="PANTHER" id="PTHR40083">
    <property type="entry name" value="UPF0122 PROTEIN CBO2450/CLC_2298"/>
    <property type="match status" value="1"/>
</dbReference>
<dbReference type="PANTHER" id="PTHR40083:SF1">
    <property type="entry name" value="UPF0122 PROTEIN YLXM"/>
    <property type="match status" value="1"/>
</dbReference>
<dbReference type="Pfam" id="PF04297">
    <property type="entry name" value="UPF0122"/>
    <property type="match status" value="1"/>
</dbReference>
<dbReference type="SUPFAM" id="SSF88659">
    <property type="entry name" value="Sigma3 and sigma4 domains of RNA polymerase sigma factors"/>
    <property type="match status" value="1"/>
</dbReference>
<gene>
    <name type="ordered locus">CBO2450</name>
    <name type="ordered locus">CLC_2298</name>
</gene>
<comment type="function">
    <text evidence="1">Might take part in the signal recognition particle (SRP) pathway. This is inferred from the conservation of its genetic proximity to ftsY/ffh. May be a regulatory protein.</text>
</comment>
<comment type="similarity">
    <text evidence="1">Belongs to the UPF0122 family.</text>
</comment>
<keyword id="KW-1185">Reference proteome</keyword>